<accession>Q9D8S3</accession>
<accession>Q544V6</accession>
<accession>Q8BW06</accession>
<accession>Q99KN8</accession>
<proteinExistence type="evidence at protein level"/>
<name>ARFG3_MOUSE</name>
<reference key="1">
    <citation type="journal article" date="2005" name="Science">
        <title>The transcriptional landscape of the mammalian genome.</title>
        <authorList>
            <person name="Carninci P."/>
            <person name="Kasukawa T."/>
            <person name="Katayama S."/>
            <person name="Gough J."/>
            <person name="Frith M.C."/>
            <person name="Maeda N."/>
            <person name="Oyama R."/>
            <person name="Ravasi T."/>
            <person name="Lenhard B."/>
            <person name="Wells C."/>
            <person name="Kodzius R."/>
            <person name="Shimokawa K."/>
            <person name="Bajic V.B."/>
            <person name="Brenner S.E."/>
            <person name="Batalov S."/>
            <person name="Forrest A.R."/>
            <person name="Zavolan M."/>
            <person name="Davis M.J."/>
            <person name="Wilming L.G."/>
            <person name="Aidinis V."/>
            <person name="Allen J.E."/>
            <person name="Ambesi-Impiombato A."/>
            <person name="Apweiler R."/>
            <person name="Aturaliya R.N."/>
            <person name="Bailey T.L."/>
            <person name="Bansal M."/>
            <person name="Baxter L."/>
            <person name="Beisel K.W."/>
            <person name="Bersano T."/>
            <person name="Bono H."/>
            <person name="Chalk A.M."/>
            <person name="Chiu K.P."/>
            <person name="Choudhary V."/>
            <person name="Christoffels A."/>
            <person name="Clutterbuck D.R."/>
            <person name="Crowe M.L."/>
            <person name="Dalla E."/>
            <person name="Dalrymple B.P."/>
            <person name="de Bono B."/>
            <person name="Della Gatta G."/>
            <person name="di Bernardo D."/>
            <person name="Down T."/>
            <person name="Engstrom P."/>
            <person name="Fagiolini M."/>
            <person name="Faulkner G."/>
            <person name="Fletcher C.F."/>
            <person name="Fukushima T."/>
            <person name="Furuno M."/>
            <person name="Futaki S."/>
            <person name="Gariboldi M."/>
            <person name="Georgii-Hemming P."/>
            <person name="Gingeras T.R."/>
            <person name="Gojobori T."/>
            <person name="Green R.E."/>
            <person name="Gustincich S."/>
            <person name="Harbers M."/>
            <person name="Hayashi Y."/>
            <person name="Hensch T.K."/>
            <person name="Hirokawa N."/>
            <person name="Hill D."/>
            <person name="Huminiecki L."/>
            <person name="Iacono M."/>
            <person name="Ikeo K."/>
            <person name="Iwama A."/>
            <person name="Ishikawa T."/>
            <person name="Jakt M."/>
            <person name="Kanapin A."/>
            <person name="Katoh M."/>
            <person name="Kawasawa Y."/>
            <person name="Kelso J."/>
            <person name="Kitamura H."/>
            <person name="Kitano H."/>
            <person name="Kollias G."/>
            <person name="Krishnan S.P."/>
            <person name="Kruger A."/>
            <person name="Kummerfeld S.K."/>
            <person name="Kurochkin I.V."/>
            <person name="Lareau L.F."/>
            <person name="Lazarevic D."/>
            <person name="Lipovich L."/>
            <person name="Liu J."/>
            <person name="Liuni S."/>
            <person name="McWilliam S."/>
            <person name="Madan Babu M."/>
            <person name="Madera M."/>
            <person name="Marchionni L."/>
            <person name="Matsuda H."/>
            <person name="Matsuzawa S."/>
            <person name="Miki H."/>
            <person name="Mignone F."/>
            <person name="Miyake S."/>
            <person name="Morris K."/>
            <person name="Mottagui-Tabar S."/>
            <person name="Mulder N."/>
            <person name="Nakano N."/>
            <person name="Nakauchi H."/>
            <person name="Ng P."/>
            <person name="Nilsson R."/>
            <person name="Nishiguchi S."/>
            <person name="Nishikawa S."/>
            <person name="Nori F."/>
            <person name="Ohara O."/>
            <person name="Okazaki Y."/>
            <person name="Orlando V."/>
            <person name="Pang K.C."/>
            <person name="Pavan W.J."/>
            <person name="Pavesi G."/>
            <person name="Pesole G."/>
            <person name="Petrovsky N."/>
            <person name="Piazza S."/>
            <person name="Reed J."/>
            <person name="Reid J.F."/>
            <person name="Ring B.Z."/>
            <person name="Ringwald M."/>
            <person name="Rost B."/>
            <person name="Ruan Y."/>
            <person name="Salzberg S.L."/>
            <person name="Sandelin A."/>
            <person name="Schneider C."/>
            <person name="Schoenbach C."/>
            <person name="Sekiguchi K."/>
            <person name="Semple C.A."/>
            <person name="Seno S."/>
            <person name="Sessa L."/>
            <person name="Sheng Y."/>
            <person name="Shibata Y."/>
            <person name="Shimada H."/>
            <person name="Shimada K."/>
            <person name="Silva D."/>
            <person name="Sinclair B."/>
            <person name="Sperling S."/>
            <person name="Stupka E."/>
            <person name="Sugiura K."/>
            <person name="Sultana R."/>
            <person name="Takenaka Y."/>
            <person name="Taki K."/>
            <person name="Tammoja K."/>
            <person name="Tan S.L."/>
            <person name="Tang S."/>
            <person name="Taylor M.S."/>
            <person name="Tegner J."/>
            <person name="Teichmann S.A."/>
            <person name="Ueda H.R."/>
            <person name="van Nimwegen E."/>
            <person name="Verardo R."/>
            <person name="Wei C.L."/>
            <person name="Yagi K."/>
            <person name="Yamanishi H."/>
            <person name="Zabarovsky E."/>
            <person name="Zhu S."/>
            <person name="Zimmer A."/>
            <person name="Hide W."/>
            <person name="Bult C."/>
            <person name="Grimmond S.M."/>
            <person name="Teasdale R.D."/>
            <person name="Liu E.T."/>
            <person name="Brusic V."/>
            <person name="Quackenbush J."/>
            <person name="Wahlestedt C."/>
            <person name="Mattick J.S."/>
            <person name="Hume D.A."/>
            <person name="Kai C."/>
            <person name="Sasaki D."/>
            <person name="Tomaru Y."/>
            <person name="Fukuda S."/>
            <person name="Kanamori-Katayama M."/>
            <person name="Suzuki M."/>
            <person name="Aoki J."/>
            <person name="Arakawa T."/>
            <person name="Iida J."/>
            <person name="Imamura K."/>
            <person name="Itoh M."/>
            <person name="Kato T."/>
            <person name="Kawaji H."/>
            <person name="Kawagashira N."/>
            <person name="Kawashima T."/>
            <person name="Kojima M."/>
            <person name="Kondo S."/>
            <person name="Konno H."/>
            <person name="Nakano K."/>
            <person name="Ninomiya N."/>
            <person name="Nishio T."/>
            <person name="Okada M."/>
            <person name="Plessy C."/>
            <person name="Shibata K."/>
            <person name="Shiraki T."/>
            <person name="Suzuki S."/>
            <person name="Tagami M."/>
            <person name="Waki K."/>
            <person name="Watahiki A."/>
            <person name="Okamura-Oho Y."/>
            <person name="Suzuki H."/>
            <person name="Kawai J."/>
            <person name="Hayashizaki Y."/>
        </authorList>
    </citation>
    <scope>NUCLEOTIDE SEQUENCE [LARGE SCALE MRNA]</scope>
    <source>
        <strain>C57BL/6J</strain>
        <strain>FVB/N</strain>
        <tissue>Amnion</tissue>
        <tissue>Pancreas</tissue>
        <tissue>Skin</tissue>
    </source>
</reference>
<reference key="2">
    <citation type="journal article" date="2004" name="Genome Res.">
        <title>The status, quality, and expansion of the NIH full-length cDNA project: the Mammalian Gene Collection (MGC).</title>
        <authorList>
            <consortium name="The MGC Project Team"/>
        </authorList>
    </citation>
    <scope>NUCLEOTIDE SEQUENCE [LARGE SCALE MRNA]</scope>
    <source>
        <strain>C57BL/6J</strain>
        <tissue>Mammary gland</tissue>
        <tissue>Olfactory epithelium</tissue>
    </source>
</reference>
<reference key="3">
    <citation type="journal article" date="2006" name="Mol. Cell. Proteomics">
        <title>Comprehensive identification of phosphorylation sites in postsynaptic density preparations.</title>
        <authorList>
            <person name="Trinidad J.C."/>
            <person name="Specht C.G."/>
            <person name="Thalhammer A."/>
            <person name="Schoepfer R."/>
            <person name="Burlingame A.L."/>
        </authorList>
    </citation>
    <scope>IDENTIFICATION BY MASS SPECTROMETRY [LARGE SCALE ANALYSIS]</scope>
    <source>
        <tissue>Brain</tissue>
    </source>
</reference>
<reference key="4">
    <citation type="journal article" date="2010" name="Cell">
        <title>A tissue-specific atlas of mouse protein phosphorylation and expression.</title>
        <authorList>
            <person name="Huttlin E.L."/>
            <person name="Jedrychowski M.P."/>
            <person name="Elias J.E."/>
            <person name="Goswami T."/>
            <person name="Rad R."/>
            <person name="Beausoleil S.A."/>
            <person name="Villen J."/>
            <person name="Haas W."/>
            <person name="Sowa M.E."/>
            <person name="Gygi S.P."/>
        </authorList>
    </citation>
    <scope>PHOSPHORYLATION [LARGE SCALE ANALYSIS] AT SER-241 AND SER-331</scope>
    <scope>IDENTIFICATION BY MASS SPECTROMETRY [LARGE SCALE ANALYSIS]</scope>
    <source>
        <tissue>Brain</tissue>
        <tissue>Brown adipose tissue</tissue>
        <tissue>Kidney</tissue>
        <tissue>Liver</tissue>
        <tissue>Lung</tissue>
        <tissue>Pancreas</tissue>
        <tissue>Spleen</tissue>
        <tissue>Testis</tissue>
    </source>
</reference>
<gene>
    <name type="primary">Arfgap3</name>
</gene>
<dbReference type="EMBL" id="AK007732">
    <property type="protein sequence ID" value="BAB25220.1"/>
    <property type="molecule type" value="mRNA"/>
</dbReference>
<dbReference type="EMBL" id="AK028990">
    <property type="protein sequence ID" value="BAC26229.1"/>
    <property type="molecule type" value="mRNA"/>
</dbReference>
<dbReference type="EMBL" id="AK075788">
    <property type="protein sequence ID" value="BAC35959.1"/>
    <property type="molecule type" value="mRNA"/>
</dbReference>
<dbReference type="EMBL" id="AK169107">
    <property type="protein sequence ID" value="BAE40889.1"/>
    <property type="molecule type" value="mRNA"/>
</dbReference>
<dbReference type="EMBL" id="BC004081">
    <property type="protein sequence ID" value="AAH04081.1"/>
    <property type="molecule type" value="mRNA"/>
</dbReference>
<dbReference type="EMBL" id="BC060369">
    <property type="protein sequence ID" value="AAH60369.1"/>
    <property type="molecule type" value="mRNA"/>
</dbReference>
<dbReference type="CCDS" id="CCDS88818.1"/>
<dbReference type="RefSeq" id="NP_001344686.1">
    <property type="nucleotide sequence ID" value="NM_001357757.1"/>
</dbReference>
<dbReference type="RefSeq" id="NP_079721.2">
    <property type="nucleotide sequence ID" value="NM_025445.4"/>
</dbReference>
<dbReference type="RefSeq" id="XP_006521316.2">
    <property type="nucleotide sequence ID" value="XM_006521253.3"/>
</dbReference>
<dbReference type="RefSeq" id="XP_006521318.2">
    <property type="nucleotide sequence ID" value="XM_006521255.3"/>
</dbReference>
<dbReference type="SMR" id="Q9D8S3"/>
<dbReference type="BioGRID" id="211327">
    <property type="interactions" value="4"/>
</dbReference>
<dbReference type="FunCoup" id="Q9D8S3">
    <property type="interactions" value="2326"/>
</dbReference>
<dbReference type="IntAct" id="Q9D8S3">
    <property type="interactions" value="1"/>
</dbReference>
<dbReference type="MINT" id="Q9D8S3"/>
<dbReference type="STRING" id="10090.ENSMUSP00000064893"/>
<dbReference type="GlyGen" id="Q9D8S3">
    <property type="glycosylation" value="1 site, 1 O-linked glycan (1 site)"/>
</dbReference>
<dbReference type="iPTMnet" id="Q9D8S3"/>
<dbReference type="PhosphoSitePlus" id="Q9D8S3"/>
<dbReference type="jPOST" id="Q9D8S3"/>
<dbReference type="PaxDb" id="10090-ENSMUSP00000064893"/>
<dbReference type="PeptideAtlas" id="Q9D8S3"/>
<dbReference type="ProteomicsDB" id="283255"/>
<dbReference type="Pumba" id="Q9D8S3"/>
<dbReference type="Antibodypedia" id="34963">
    <property type="antibodies" value="273 antibodies from 36 providers"/>
</dbReference>
<dbReference type="DNASU" id="66251"/>
<dbReference type="Ensembl" id="ENSMUST00000226124.2">
    <property type="protein sequence ID" value="ENSMUSP00000154712.2"/>
    <property type="gene ID" value="ENSMUSG00000054277.9"/>
</dbReference>
<dbReference type="GeneID" id="66251"/>
<dbReference type="KEGG" id="mmu:66251"/>
<dbReference type="UCSC" id="uc007xag.1">
    <property type="organism name" value="mouse"/>
</dbReference>
<dbReference type="AGR" id="MGI:1913501"/>
<dbReference type="CTD" id="26286"/>
<dbReference type="MGI" id="MGI:1913501">
    <property type="gene designation" value="Arfgap3"/>
</dbReference>
<dbReference type="VEuPathDB" id="HostDB:ENSMUSG00000054277"/>
<dbReference type="eggNOG" id="KOG0706">
    <property type="taxonomic scope" value="Eukaryota"/>
</dbReference>
<dbReference type="GeneTree" id="ENSGT00940000158466"/>
<dbReference type="InParanoid" id="Q9D8S3"/>
<dbReference type="OrthoDB" id="983479at2759"/>
<dbReference type="PhylomeDB" id="Q9D8S3"/>
<dbReference type="TreeFam" id="TF313985"/>
<dbReference type="Reactome" id="R-MMU-6807878">
    <property type="pathway name" value="COPI-mediated anterograde transport"/>
</dbReference>
<dbReference type="Reactome" id="R-MMU-6811434">
    <property type="pathway name" value="COPI-dependent Golgi-to-ER retrograde traffic"/>
</dbReference>
<dbReference type="Reactome" id="R-MMU-9013408">
    <property type="pathway name" value="RHOG GTPase cycle"/>
</dbReference>
<dbReference type="BioGRID-ORCS" id="66251">
    <property type="hits" value="2 hits in 76 CRISPR screens"/>
</dbReference>
<dbReference type="CD-CODE" id="CE726F99">
    <property type="entry name" value="Postsynaptic density"/>
</dbReference>
<dbReference type="ChiTaRS" id="Arfgap3">
    <property type="organism name" value="mouse"/>
</dbReference>
<dbReference type="PRO" id="PR:Q9D8S3"/>
<dbReference type="Proteomes" id="UP000000589">
    <property type="component" value="Chromosome 15"/>
</dbReference>
<dbReference type="RNAct" id="Q9D8S3">
    <property type="molecule type" value="protein"/>
</dbReference>
<dbReference type="Bgee" id="ENSMUSG00000054277">
    <property type="expression patterns" value="Expressed in lacrimal gland and 255 other cell types or tissues"/>
</dbReference>
<dbReference type="ExpressionAtlas" id="Q9D8S3">
    <property type="expression patterns" value="baseline and differential"/>
</dbReference>
<dbReference type="GO" id="GO:0005829">
    <property type="term" value="C:cytosol"/>
    <property type="evidence" value="ECO:0000250"/>
    <property type="project" value="UniProtKB"/>
</dbReference>
<dbReference type="GO" id="GO:0000139">
    <property type="term" value="C:Golgi membrane"/>
    <property type="evidence" value="ECO:0007669"/>
    <property type="project" value="UniProtKB-SubCell"/>
</dbReference>
<dbReference type="GO" id="GO:0098684">
    <property type="term" value="C:photoreceptor ribbon synapse"/>
    <property type="evidence" value="ECO:0000314"/>
    <property type="project" value="SynGO"/>
</dbReference>
<dbReference type="GO" id="GO:0048786">
    <property type="term" value="C:presynaptic active zone"/>
    <property type="evidence" value="ECO:0000314"/>
    <property type="project" value="SynGO"/>
</dbReference>
<dbReference type="GO" id="GO:0005096">
    <property type="term" value="F:GTPase activator activity"/>
    <property type="evidence" value="ECO:0000250"/>
    <property type="project" value="UniProtKB"/>
</dbReference>
<dbReference type="GO" id="GO:0008270">
    <property type="term" value="F:zinc ion binding"/>
    <property type="evidence" value="ECO:0007669"/>
    <property type="project" value="UniProtKB-KW"/>
</dbReference>
<dbReference type="GO" id="GO:0140238">
    <property type="term" value="P:presynaptic endocytosis"/>
    <property type="evidence" value="ECO:0000314"/>
    <property type="project" value="SynGO"/>
</dbReference>
<dbReference type="GO" id="GO:0009306">
    <property type="term" value="P:protein secretion"/>
    <property type="evidence" value="ECO:0000250"/>
    <property type="project" value="UniProtKB"/>
</dbReference>
<dbReference type="CDD" id="cd09028">
    <property type="entry name" value="ArfGap_ArfGap3"/>
    <property type="match status" value="1"/>
</dbReference>
<dbReference type="FunFam" id="1.10.220.150:FF:000004">
    <property type="entry name" value="Putative ADP-ribosylation factor GTPase-activating protein 2"/>
    <property type="match status" value="1"/>
</dbReference>
<dbReference type="Gene3D" id="1.10.220.150">
    <property type="entry name" value="Arf GTPase activating protein"/>
    <property type="match status" value="1"/>
</dbReference>
<dbReference type="InterPro" id="IPR037278">
    <property type="entry name" value="ARFGAP/RecO"/>
</dbReference>
<dbReference type="InterPro" id="IPR001164">
    <property type="entry name" value="ArfGAP_dom"/>
</dbReference>
<dbReference type="InterPro" id="IPR038508">
    <property type="entry name" value="ArfGAP_dom_sf"/>
</dbReference>
<dbReference type="PANTHER" id="PTHR45686">
    <property type="entry name" value="ADP-RIBOSYLATION FACTOR GTPASE ACTIVATING PROTEIN 3, ISOFORM H-RELATED"/>
    <property type="match status" value="1"/>
</dbReference>
<dbReference type="PANTHER" id="PTHR45686:SF1">
    <property type="entry name" value="ADP-RIBOSYLATION FACTOR GTPASE-ACTIVATING PROTEIN 3"/>
    <property type="match status" value="1"/>
</dbReference>
<dbReference type="Pfam" id="PF01412">
    <property type="entry name" value="ArfGap"/>
    <property type="match status" value="1"/>
</dbReference>
<dbReference type="PRINTS" id="PR00405">
    <property type="entry name" value="REVINTRACTNG"/>
</dbReference>
<dbReference type="SMART" id="SM00105">
    <property type="entry name" value="ArfGap"/>
    <property type="match status" value="1"/>
</dbReference>
<dbReference type="SUPFAM" id="SSF57863">
    <property type="entry name" value="ArfGap/RecO-like zinc finger"/>
    <property type="match status" value="1"/>
</dbReference>
<dbReference type="PROSITE" id="PS50115">
    <property type="entry name" value="ARFGAP"/>
    <property type="match status" value="1"/>
</dbReference>
<evidence type="ECO:0000250" key="1"/>
<evidence type="ECO:0000250" key="2">
    <source>
        <dbReference type="UniProtKB" id="Q9NP61"/>
    </source>
</evidence>
<evidence type="ECO:0000255" key="3">
    <source>
        <dbReference type="PROSITE-ProRule" id="PRU00288"/>
    </source>
</evidence>
<evidence type="ECO:0000256" key="4">
    <source>
        <dbReference type="SAM" id="MobiDB-lite"/>
    </source>
</evidence>
<evidence type="ECO:0000305" key="5"/>
<evidence type="ECO:0007744" key="6">
    <source>
    </source>
</evidence>
<feature type="chain" id="PRO_0000074194" description="ADP-ribosylation factor GTPase-activating protein 3">
    <location>
        <begin position="1"/>
        <end position="523"/>
    </location>
</feature>
<feature type="domain" description="Arf-GAP" evidence="3">
    <location>
        <begin position="10"/>
        <end position="126"/>
    </location>
</feature>
<feature type="zinc finger region" description="C4-type" evidence="3">
    <location>
        <begin position="25"/>
        <end position="48"/>
    </location>
</feature>
<feature type="region of interest" description="Disordered" evidence="4">
    <location>
        <begin position="162"/>
        <end position="206"/>
    </location>
</feature>
<feature type="region of interest" description="Disordered" evidence="4">
    <location>
        <begin position="248"/>
        <end position="269"/>
    </location>
</feature>
<feature type="region of interest" description="Disordered" evidence="4">
    <location>
        <begin position="308"/>
        <end position="424"/>
    </location>
</feature>
<feature type="compositionally biased region" description="Polar residues" evidence="4">
    <location>
        <begin position="164"/>
        <end position="177"/>
    </location>
</feature>
<feature type="compositionally biased region" description="Polar residues" evidence="4">
    <location>
        <begin position="314"/>
        <end position="332"/>
    </location>
</feature>
<feature type="compositionally biased region" description="Low complexity" evidence="4">
    <location>
        <begin position="348"/>
        <end position="361"/>
    </location>
</feature>
<feature type="compositionally biased region" description="Basic and acidic residues" evidence="4">
    <location>
        <begin position="385"/>
        <end position="396"/>
    </location>
</feature>
<feature type="modified residue" description="Phosphoserine" evidence="2">
    <location>
        <position position="231"/>
    </location>
</feature>
<feature type="modified residue" description="Phosphoserine" evidence="6">
    <location>
        <position position="241"/>
    </location>
</feature>
<feature type="modified residue" description="Phosphoserine" evidence="2">
    <location>
        <position position="270"/>
    </location>
</feature>
<feature type="modified residue" description="Phosphoserine" evidence="2">
    <location>
        <position position="274"/>
    </location>
</feature>
<feature type="modified residue" description="Phosphoserine" evidence="6">
    <location>
        <position position="331"/>
    </location>
</feature>
<feature type="modified residue" description="Phosphoserine" evidence="2">
    <location>
        <position position="377"/>
    </location>
</feature>
<feature type="modified residue" description="Phosphoserine" evidence="2">
    <location>
        <position position="435"/>
    </location>
</feature>
<feature type="modified residue" description="Phosphoserine" evidence="2">
    <location>
        <position position="458"/>
    </location>
</feature>
<feature type="modified residue" description="Phosphoserine" evidence="2">
    <location>
        <position position="460"/>
    </location>
</feature>
<feature type="modified residue" description="Phosphoserine" evidence="2">
    <location>
        <position position="462"/>
    </location>
</feature>
<feature type="modified residue" description="Phosphoserine" evidence="2">
    <location>
        <position position="464"/>
    </location>
</feature>
<feature type="modified residue" description="Phosphoserine" evidence="2">
    <location>
        <position position="465"/>
    </location>
</feature>
<feature type="sequence conflict" description="In Ref. 1; BAB25220." evidence="5" ref="1">
    <original>P</original>
    <variation>PA</variation>
    <location>
        <position position="208"/>
    </location>
</feature>
<feature type="sequence conflict" description="In Ref. 1; BAB25220/BAC26229 and 2; AAH04081." evidence="5" ref="1 2">
    <original>S</original>
    <variation>SS</variation>
    <location>
        <position position="361"/>
    </location>
</feature>
<keyword id="KW-0963">Cytoplasm</keyword>
<keyword id="KW-0931">ER-Golgi transport</keyword>
<keyword id="KW-0333">Golgi apparatus</keyword>
<keyword id="KW-0343">GTPase activation</keyword>
<keyword id="KW-0472">Membrane</keyword>
<keyword id="KW-0479">Metal-binding</keyword>
<keyword id="KW-0597">Phosphoprotein</keyword>
<keyword id="KW-0653">Protein transport</keyword>
<keyword id="KW-1185">Reference proteome</keyword>
<keyword id="KW-0813">Transport</keyword>
<keyword id="KW-0862">Zinc</keyword>
<keyword id="KW-0863">Zinc-finger</keyword>
<comment type="function">
    <text evidence="1">GTPase-activating protein (GAP) for ADP ribosylation factor 1 (ARF1). Hydrolysis of ARF1-bound GTP may lead to dissociation of coatomer from Golgi-derived membranes to allow fusion with target membranes (By similarity).</text>
</comment>
<comment type="activity regulation">
    <text evidence="1">GAP activity stimulated by phosphatidylinositol 4,5-bisphosphate (PIP2).</text>
</comment>
<comment type="subcellular location">
    <subcellularLocation>
        <location evidence="1">Cytoplasm</location>
    </subcellularLocation>
    <subcellularLocation>
        <location evidence="1">Golgi apparatus membrane</location>
        <topology evidence="1">Peripheral membrane protein</topology>
        <orientation evidence="1">Cytoplasmic side</orientation>
    </subcellularLocation>
    <text evidence="1">Also found on peripheral punctate structures likely to be endoplasmic reticulum-Golgi intermediate compartment.</text>
</comment>
<protein>
    <recommendedName>
        <fullName>ADP-ribosylation factor GTPase-activating protein 3</fullName>
        <shortName>ARF GAP 3</shortName>
    </recommendedName>
</protein>
<organism>
    <name type="scientific">Mus musculus</name>
    <name type="common">Mouse</name>
    <dbReference type="NCBI Taxonomy" id="10090"/>
    <lineage>
        <taxon>Eukaryota</taxon>
        <taxon>Metazoa</taxon>
        <taxon>Chordata</taxon>
        <taxon>Craniata</taxon>
        <taxon>Vertebrata</taxon>
        <taxon>Euteleostomi</taxon>
        <taxon>Mammalia</taxon>
        <taxon>Eutheria</taxon>
        <taxon>Euarchontoglires</taxon>
        <taxon>Glires</taxon>
        <taxon>Rodentia</taxon>
        <taxon>Myomorpha</taxon>
        <taxon>Muroidea</taxon>
        <taxon>Muridae</taxon>
        <taxon>Murinae</taxon>
        <taxon>Mus</taxon>
        <taxon>Mus</taxon>
    </lineage>
</organism>
<sequence>MGDPSKQDILAIFKRLRSVPTNKVCFDCGAKNPSWASISYGVFLCIDCSGSHRSLGVHLSFIRSTELDSNWSWFQLRCMQVGGNSNASSFFHQHGCATKDTNAKYNSRAAQLYREKIKTLATQATRRHGTDLWLDSCAAPPVSPPPKEEDFFASHASLEVSGAMQASAQPESASSTPWGLETTPEKHEGGPGQGPSVEGLNTPGKAAPEVSSIIKKKPNQAKKGLGAKKGSLGAQKLTNTSFTEIEKQAQAVDKRKEQEDLARGAPKEESIVSSLRLAYKDLEISRKKDERLNLSGQKKVEAERLGMGFGSCRSGISHSVTSDMQTIEQESPTLAKPRRKYQEDPEDSYFSSSSKWSEQSSRYFDDPMELRSSSFSSWDDGADSYWKKDSSRDPEPAMRSTGSSDRPSARRKPEYEPIGSTDEAQKKFGNVKAISSDMYFGIQAQTDFETRARLERLSTSSSISSADLFDEQRKQTAGNYNLSNVLPNAPDMAQFKQGVRSVAGKLSVFANGVMTSIQDRYGS</sequence>